<gene>
    <name type="ordered locus">MIMI_L66</name>
</gene>
<protein>
    <recommendedName>
        <fullName>Putative ankyrin repeat protein L66</fullName>
    </recommendedName>
</protein>
<accession>Q5UPD9</accession>
<sequence length="587" mass="67470">MTADLPYEIWMNIIEYLGNDTINLLLVSKYLFFLATFCNISKKKLYKSIIKNGYIDILKYIRELTVNGEISAKIKMDKNLSMLLATKYGKLNIIKYLVRNGTDIRICNNYPVRKASKYGYLDIVKYLIREDCDVSDYDNYALRKATKNGYFEIVKLLVDQGADVHCCDNAPIKLACKYGYSKMVKFFHKKFLDVNYDFNEDLLLKLASSGGHYKIVKYLVTKSNNIHFEDSLISVIKKGHLDILKYFISKGVILGNNKNIRNATLMACKKGHYNVVEYLIDNIISIENMKKKYSCDIEIDIFKKNLITNTCISGNLDMLKYLISKGINVAFEDNLPIKISACHDHLHLVKYLVSISNVKINYENILISASENGCIKVVKYLVDKGVNVKDNTAIYSAGINGYLQIVKFLESNGADLIKYHNEIFLECSSNGYLNVIKYIVSKYNINKSIYDKALIIASKNNQLKTVKYLVHMGADIKSIKFHDMEKIIDNDLELLKYLVSKGLKINNIYKNLISKIIMNNDLDKLKYLISLGVNMKCIRIDTFNSCIQNRNKEMLSYLISRKIKLICYCEEGTEEDSEEDTEEDSEN</sequence>
<keyword id="KW-0040">ANK repeat</keyword>
<keyword id="KW-1185">Reference proteome</keyword>
<keyword id="KW-0677">Repeat</keyword>
<name>YL066_MIMIV</name>
<feature type="chain" id="PRO_0000067145" description="Putative ankyrin repeat protein L66">
    <location>
        <begin position="1"/>
        <end position="587"/>
    </location>
</feature>
<feature type="repeat" description="ANK 1">
    <location>
        <begin position="77"/>
        <end position="106"/>
    </location>
</feature>
<feature type="repeat" description="ANK 2">
    <location>
        <begin position="108"/>
        <end position="136"/>
    </location>
</feature>
<feature type="repeat" description="ANK 3">
    <location>
        <begin position="137"/>
        <end position="166"/>
    </location>
</feature>
<feature type="repeat" description="ANK 4">
    <location>
        <begin position="168"/>
        <end position="196"/>
    </location>
</feature>
<feature type="repeat" description="ANK 5">
    <location>
        <begin position="199"/>
        <end position="228"/>
    </location>
</feature>
<feature type="repeat" description="ANK 6">
    <location>
        <begin position="230"/>
        <end position="256"/>
    </location>
</feature>
<feature type="repeat" description="ANK 7">
    <location>
        <begin position="259"/>
        <end position="288"/>
    </location>
</feature>
<feature type="repeat" description="ANK 8">
    <location>
        <begin position="302"/>
        <end position="331"/>
    </location>
</feature>
<feature type="repeat" description="ANK 9">
    <location>
        <begin position="333"/>
        <end position="360"/>
    </location>
</feature>
<feature type="repeat" description="ANK 10">
    <location>
        <begin position="361"/>
        <end position="390"/>
    </location>
</feature>
<feature type="repeat" description="ANK 11">
    <location>
        <begin position="392"/>
        <end position="418"/>
    </location>
</feature>
<feature type="repeat" description="ANK 12">
    <location>
        <begin position="420"/>
        <end position="448"/>
    </location>
</feature>
<feature type="repeat" description="ANK 13">
    <location>
        <begin position="449"/>
        <end position="478"/>
    </location>
</feature>
<feature type="repeat" description="ANK 14">
    <location>
        <begin position="480"/>
        <end position="507"/>
    </location>
</feature>
<feature type="repeat" description="ANK 15">
    <location>
        <begin position="509"/>
        <end position="537"/>
    </location>
</feature>
<feature type="repeat" description="ANK 16">
    <location>
        <begin position="539"/>
        <end position="567"/>
    </location>
</feature>
<dbReference type="EMBL" id="AY653733">
    <property type="protein sequence ID" value="AAV50341.1"/>
    <property type="molecule type" value="Genomic_DNA"/>
</dbReference>
<dbReference type="SMR" id="Q5UPD9"/>
<dbReference type="Proteomes" id="UP000001134">
    <property type="component" value="Genome"/>
</dbReference>
<dbReference type="Gene3D" id="1.25.40.20">
    <property type="entry name" value="Ankyrin repeat-containing domain"/>
    <property type="match status" value="5"/>
</dbReference>
<dbReference type="InterPro" id="IPR002110">
    <property type="entry name" value="Ankyrin_rpt"/>
</dbReference>
<dbReference type="InterPro" id="IPR036770">
    <property type="entry name" value="Ankyrin_rpt-contain_sf"/>
</dbReference>
<dbReference type="PANTHER" id="PTHR24188">
    <property type="entry name" value="ANKYRIN REPEAT PROTEIN"/>
    <property type="match status" value="1"/>
</dbReference>
<dbReference type="PANTHER" id="PTHR24188:SF29">
    <property type="entry name" value="GH09064P"/>
    <property type="match status" value="1"/>
</dbReference>
<dbReference type="Pfam" id="PF12796">
    <property type="entry name" value="Ank_2"/>
    <property type="match status" value="3"/>
</dbReference>
<dbReference type="SMART" id="SM00248">
    <property type="entry name" value="ANK"/>
    <property type="match status" value="13"/>
</dbReference>
<dbReference type="SUPFAM" id="SSF48403">
    <property type="entry name" value="Ankyrin repeat"/>
    <property type="match status" value="2"/>
</dbReference>
<dbReference type="PROSITE" id="PS50297">
    <property type="entry name" value="ANK_REP_REGION"/>
    <property type="match status" value="1"/>
</dbReference>
<dbReference type="PROSITE" id="PS50088">
    <property type="entry name" value="ANK_REPEAT"/>
    <property type="match status" value="2"/>
</dbReference>
<proteinExistence type="predicted"/>
<reference key="1">
    <citation type="journal article" date="2004" name="Science">
        <title>The 1.2-megabase genome sequence of Mimivirus.</title>
        <authorList>
            <person name="Raoult D."/>
            <person name="Audic S."/>
            <person name="Robert C."/>
            <person name="Abergel C."/>
            <person name="Renesto P."/>
            <person name="Ogata H."/>
            <person name="La Scola B."/>
            <person name="Susan M."/>
            <person name="Claverie J.-M."/>
        </authorList>
    </citation>
    <scope>NUCLEOTIDE SEQUENCE [LARGE SCALE GENOMIC DNA]</scope>
    <source>
        <strain>Rowbotham-Bradford</strain>
    </source>
</reference>
<organism>
    <name type="scientific">Acanthamoeba polyphaga mimivirus</name>
    <name type="common">APMV</name>
    <dbReference type="NCBI Taxonomy" id="212035"/>
    <lineage>
        <taxon>Viruses</taxon>
        <taxon>Varidnaviria</taxon>
        <taxon>Bamfordvirae</taxon>
        <taxon>Nucleocytoviricota</taxon>
        <taxon>Megaviricetes</taxon>
        <taxon>Imitervirales</taxon>
        <taxon>Mimiviridae</taxon>
        <taxon>Megamimivirinae</taxon>
        <taxon>Mimivirus</taxon>
        <taxon>Mimivirus bradfordmassiliense</taxon>
    </lineage>
</organism>
<organismHost>
    <name type="scientific">Acanthamoeba polyphaga</name>
    <name type="common">Amoeba</name>
    <dbReference type="NCBI Taxonomy" id="5757"/>
</organismHost>